<name>YO83_BPP2</name>
<evidence type="ECO:0000305" key="1"/>
<accession>Q06425</accession>
<sequence length="91" mass="10196">MSIRIEIGERYVVTSDSFQFILHEKKRAESGKNAGQEWLAVVGYYPKLSQLVSGLMHHDILTGSAKSFADLNVQVEQLSKRCSEAFGSYGR</sequence>
<organism>
    <name type="scientific">Escherichia phage P2</name>
    <name type="common">Bacteriophage P2</name>
    <dbReference type="NCBI Taxonomy" id="2905681"/>
    <lineage>
        <taxon>Viruses</taxon>
        <taxon>Duplodnaviria</taxon>
        <taxon>Heunggongvirae</taxon>
        <taxon>Uroviricota</taxon>
        <taxon>Caudoviricetes</taxon>
        <taxon>Peduoviridae</taxon>
        <taxon>Peduovirus</taxon>
        <taxon>Peduovirus P2</taxon>
    </lineage>
</organism>
<dbReference type="EMBL" id="AF063097">
    <property type="protein sequence ID" value="AAD03305.1"/>
    <property type="molecule type" value="Genomic_DNA"/>
</dbReference>
<dbReference type="PIR" id="S33834">
    <property type="entry name" value="S33834"/>
</dbReference>
<dbReference type="RefSeq" id="NP_046794.1">
    <property type="nucleotide sequence ID" value="NC_001895.1"/>
</dbReference>
<dbReference type="KEGG" id="vg:77440828"/>
<dbReference type="Proteomes" id="UP000009092">
    <property type="component" value="Genome"/>
</dbReference>
<dbReference type="InterPro" id="IPR035404">
    <property type="entry name" value="DUF5405"/>
</dbReference>
<dbReference type="Pfam" id="PF17399">
    <property type="entry name" value="DUF5405"/>
    <property type="match status" value="1"/>
</dbReference>
<protein>
    <recommendedName>
        <fullName>Uncharacterized 10.2 kDa protein in GpA 5'region</fullName>
    </recommendedName>
    <alternativeName>
        <fullName>ORF4</fullName>
    </alternativeName>
</protein>
<organismHost>
    <name type="scientific">Enterobacteriaceae</name>
    <dbReference type="NCBI Taxonomy" id="543"/>
</organismHost>
<reference key="1">
    <citation type="journal article" date="1993" name="J. Mol. Biol.">
        <title>Studies of bacteriophage P2 DNA replication. The DNA sequence of the cis-acting gene A and ori region and construction of a P2 mini-chromosome.</title>
        <authorList>
            <person name="Liu Y."/>
            <person name="Saha S."/>
            <person name="Haggaard-Ljungquist E."/>
        </authorList>
    </citation>
    <scope>NUCLEOTIDE SEQUENCE [GENOMIC DNA]</scope>
</reference>
<keyword id="KW-1185">Reference proteome</keyword>
<comment type="similarity">
    <text evidence="1">To phage 186 CP83.</text>
</comment>
<proteinExistence type="predicted"/>
<gene>
    <name type="primary">ORF83</name>
</gene>
<feature type="chain" id="PRO_0000165268" description="Uncharacterized 10.2 kDa protein in GpA 5'region">
    <location>
        <begin position="1"/>
        <end position="91"/>
    </location>
</feature>